<name>Y1252_METJA</name>
<comment type="similarity">
    <text evidence="1">To M.jannaschii MJ0638 and MJ1123 and M.tuberculosis Rv2003c.</text>
</comment>
<feature type="chain" id="PRO_0000107241" description="Uncharacterized protein MJ1252">
    <location>
        <begin position="1"/>
        <end position="251"/>
    </location>
</feature>
<keyword id="KW-0489">Methyltransferase</keyword>
<keyword id="KW-1185">Reference proteome</keyword>
<keyword id="KW-0808">Transferase</keyword>
<dbReference type="EMBL" id="L77117">
    <property type="protein sequence ID" value="AAB99255.1"/>
    <property type="molecule type" value="Genomic_DNA"/>
</dbReference>
<dbReference type="PIR" id="B64456">
    <property type="entry name" value="B64456"/>
</dbReference>
<dbReference type="FunCoup" id="Q58648">
    <property type="interactions" value="34"/>
</dbReference>
<dbReference type="STRING" id="243232.MJ_1252"/>
<dbReference type="PaxDb" id="243232-MJ_1252"/>
<dbReference type="EnsemblBacteria" id="AAB99255">
    <property type="protein sequence ID" value="AAB99255"/>
    <property type="gene ID" value="MJ_1252"/>
</dbReference>
<dbReference type="KEGG" id="mja:MJ_1252"/>
<dbReference type="eggNOG" id="arCOG01774">
    <property type="taxonomic scope" value="Archaea"/>
</dbReference>
<dbReference type="HOGENOM" id="CLU_096708_0_0_2"/>
<dbReference type="InParanoid" id="Q58648"/>
<dbReference type="PhylomeDB" id="Q58648"/>
<dbReference type="Proteomes" id="UP000000805">
    <property type="component" value="Chromosome"/>
</dbReference>
<dbReference type="GO" id="GO:0008168">
    <property type="term" value="F:methyltransferase activity"/>
    <property type="evidence" value="ECO:0000318"/>
    <property type="project" value="GO_Central"/>
</dbReference>
<dbReference type="GO" id="GO:0008757">
    <property type="term" value="F:S-adenosylmethionine-dependent methyltransferase activity"/>
    <property type="evidence" value="ECO:0007669"/>
    <property type="project" value="InterPro"/>
</dbReference>
<dbReference type="GO" id="GO:0032259">
    <property type="term" value="P:methylation"/>
    <property type="evidence" value="ECO:0007669"/>
    <property type="project" value="UniProtKB-KW"/>
</dbReference>
<dbReference type="CDD" id="cd02440">
    <property type="entry name" value="AdoMet_MTases"/>
    <property type="match status" value="1"/>
</dbReference>
<dbReference type="Gene3D" id="3.40.50.150">
    <property type="entry name" value="Vaccinia Virus protein VP39"/>
    <property type="match status" value="1"/>
</dbReference>
<dbReference type="InterPro" id="IPR013216">
    <property type="entry name" value="Methyltransf_11"/>
</dbReference>
<dbReference type="InterPro" id="IPR050508">
    <property type="entry name" value="Methyltransf_Superfamily"/>
</dbReference>
<dbReference type="InterPro" id="IPR029063">
    <property type="entry name" value="SAM-dependent_MTases_sf"/>
</dbReference>
<dbReference type="PANTHER" id="PTHR42912">
    <property type="entry name" value="METHYLTRANSFERASE"/>
    <property type="match status" value="1"/>
</dbReference>
<dbReference type="PANTHER" id="PTHR42912:SF80">
    <property type="entry name" value="METHYLTRANSFERASE DOMAIN-CONTAINING PROTEIN"/>
    <property type="match status" value="1"/>
</dbReference>
<dbReference type="Pfam" id="PF08241">
    <property type="entry name" value="Methyltransf_11"/>
    <property type="match status" value="1"/>
</dbReference>
<dbReference type="SUPFAM" id="SSF53335">
    <property type="entry name" value="S-adenosyl-L-methionine-dependent methyltransferases"/>
    <property type="match status" value="1"/>
</dbReference>
<organism>
    <name type="scientific">Methanocaldococcus jannaschii (strain ATCC 43067 / DSM 2661 / JAL-1 / JCM 10045 / NBRC 100440)</name>
    <name type="common">Methanococcus jannaschii</name>
    <dbReference type="NCBI Taxonomy" id="243232"/>
    <lineage>
        <taxon>Archaea</taxon>
        <taxon>Methanobacteriati</taxon>
        <taxon>Methanobacteriota</taxon>
        <taxon>Methanomada group</taxon>
        <taxon>Methanococci</taxon>
        <taxon>Methanococcales</taxon>
        <taxon>Methanocaldococcaceae</taxon>
        <taxon>Methanocaldococcus</taxon>
    </lineage>
</organism>
<sequence>MCKAFCSCYSYHYHHREKMGIKEYYDKLAKSYDKLYKNKYMRIVEREIIQKEIKDGDFVLDIGCGTGEQLKILNNAVGLDISLEMAKIAKNKTNKPVVVANAEFLPFKNKSFDKAISFFGALNHCNLKRALREVNRVLKDDGIFIFTVANIYDIKWIIKNILKGNFKKVKNAMKKRKGTITKVIDGEKIKVKTRFYDFKEVEDALKKEGFEVVYTFGTNITNSPLDKFIYKSFLKNFASYIGFVAKKVKNR</sequence>
<gene>
    <name type="ordered locus">MJ1252</name>
</gene>
<reference key="1">
    <citation type="journal article" date="1996" name="Science">
        <title>Complete genome sequence of the methanogenic archaeon, Methanococcus jannaschii.</title>
        <authorList>
            <person name="Bult C.J."/>
            <person name="White O."/>
            <person name="Olsen G.J."/>
            <person name="Zhou L."/>
            <person name="Fleischmann R.D."/>
            <person name="Sutton G.G."/>
            <person name="Blake J.A."/>
            <person name="FitzGerald L.M."/>
            <person name="Clayton R.A."/>
            <person name="Gocayne J.D."/>
            <person name="Kerlavage A.R."/>
            <person name="Dougherty B.A."/>
            <person name="Tomb J.-F."/>
            <person name="Adams M.D."/>
            <person name="Reich C.I."/>
            <person name="Overbeek R."/>
            <person name="Kirkness E.F."/>
            <person name="Weinstock K.G."/>
            <person name="Merrick J.M."/>
            <person name="Glodek A."/>
            <person name="Scott J.L."/>
            <person name="Geoghagen N.S.M."/>
            <person name="Weidman J.F."/>
            <person name="Fuhrmann J.L."/>
            <person name="Nguyen D."/>
            <person name="Utterback T.R."/>
            <person name="Kelley J.M."/>
            <person name="Peterson J.D."/>
            <person name="Sadow P.W."/>
            <person name="Hanna M.C."/>
            <person name="Cotton M.D."/>
            <person name="Roberts K.M."/>
            <person name="Hurst M.A."/>
            <person name="Kaine B.P."/>
            <person name="Borodovsky M."/>
            <person name="Klenk H.-P."/>
            <person name="Fraser C.M."/>
            <person name="Smith H.O."/>
            <person name="Woese C.R."/>
            <person name="Venter J.C."/>
        </authorList>
    </citation>
    <scope>NUCLEOTIDE SEQUENCE [LARGE SCALE GENOMIC DNA]</scope>
    <source>
        <strain>ATCC 43067 / DSM 2661 / JAL-1 / JCM 10045 / NBRC 100440</strain>
    </source>
</reference>
<evidence type="ECO:0000305" key="1"/>
<protein>
    <recommendedName>
        <fullName>Uncharacterized protein MJ1252</fullName>
    </recommendedName>
</protein>
<proteinExistence type="predicted"/>
<accession>Q58648</accession>